<keyword id="KW-0249">Electron transport</keyword>
<keyword id="KW-0472">Membrane</keyword>
<keyword id="KW-0496">Mitochondrion</keyword>
<keyword id="KW-0999">Mitochondrion inner membrane</keyword>
<keyword id="KW-0520">NAD</keyword>
<keyword id="KW-0679">Respiratory chain</keyword>
<keyword id="KW-1278">Translocase</keyword>
<keyword id="KW-0812">Transmembrane</keyword>
<keyword id="KW-1133">Transmembrane helix</keyword>
<keyword id="KW-0813">Transport</keyword>
<keyword id="KW-0830">Ubiquinone</keyword>
<reference key="1">
    <citation type="journal article" date="1991" name="Genes Dev.">
        <title>Multiple trans-splicing events are required to produce a mature nad1 transcript in a plant mitochondrion.</title>
        <authorList>
            <person name="Conklin P.L."/>
            <person name="Wilson R.K."/>
            <person name="Hanson M.R."/>
        </authorList>
    </citation>
    <scope>NUCLEOTIDE SEQUENCE [GENOMIC DNA]</scope>
    <source>
        <strain>Line 3704</strain>
    </source>
</reference>
<feature type="chain" id="PRO_0000117451" description="NADH-ubiquinone oxidoreductase chain 1">
    <location>
        <begin position="1"/>
        <end position="325"/>
    </location>
</feature>
<feature type="transmembrane region" description="Helical" evidence="2">
    <location>
        <begin position="5"/>
        <end position="25"/>
    </location>
</feature>
<feature type="transmembrane region" description="Helical" evidence="2">
    <location>
        <begin position="79"/>
        <end position="99"/>
    </location>
</feature>
<feature type="transmembrane region" description="Helical" evidence="2">
    <location>
        <begin position="105"/>
        <end position="125"/>
    </location>
</feature>
<feature type="transmembrane region" description="Helical" evidence="2">
    <location>
        <begin position="144"/>
        <end position="164"/>
    </location>
</feature>
<feature type="transmembrane region" description="Helical" evidence="2">
    <location>
        <begin position="177"/>
        <end position="197"/>
    </location>
</feature>
<feature type="transmembrane region" description="Helical" evidence="2">
    <location>
        <begin position="237"/>
        <end position="257"/>
    </location>
</feature>
<feature type="transmembrane region" description="Helical" evidence="2">
    <location>
        <begin position="263"/>
        <end position="283"/>
    </location>
</feature>
<feature type="transmembrane region" description="Helical" evidence="2">
    <location>
        <begin position="302"/>
        <end position="322"/>
    </location>
</feature>
<comment type="function">
    <text evidence="1">Core subunit of the mitochondrial membrane respiratory chain NADH dehydrogenase (Complex I) that is believed to belong to the minimal assembly required for catalysis. Complex I functions in the transfer of electrons from NADH to the respiratory chain. The immediate electron acceptor for the enzyme is believed to be ubiquinone (By similarity).</text>
</comment>
<comment type="catalytic activity">
    <reaction>
        <text>a ubiquinone + NADH + 5 H(+)(in) = a ubiquinol + NAD(+) + 4 H(+)(out)</text>
        <dbReference type="Rhea" id="RHEA:29091"/>
        <dbReference type="Rhea" id="RHEA-COMP:9565"/>
        <dbReference type="Rhea" id="RHEA-COMP:9566"/>
        <dbReference type="ChEBI" id="CHEBI:15378"/>
        <dbReference type="ChEBI" id="CHEBI:16389"/>
        <dbReference type="ChEBI" id="CHEBI:17976"/>
        <dbReference type="ChEBI" id="CHEBI:57540"/>
        <dbReference type="ChEBI" id="CHEBI:57945"/>
        <dbReference type="EC" id="7.1.1.2"/>
    </reaction>
</comment>
<comment type="subcellular location">
    <subcellularLocation>
        <location evidence="1">Mitochondrion inner membrane</location>
        <topology evidence="1">Multi-pass membrane protein</topology>
    </subcellularLocation>
</comment>
<comment type="similarity">
    <text evidence="3">Belongs to the complex I subunit 1 family.</text>
</comment>
<dbReference type="EC" id="7.1.1.2"/>
<dbReference type="EMBL" id="X60400">
    <property type="protein sequence ID" value="CAA42946.1"/>
    <property type="molecule type" value="Genomic_DNA"/>
</dbReference>
<dbReference type="PIR" id="B40358">
    <property type="entry name" value="B40358"/>
</dbReference>
<dbReference type="SMR" id="Q01300"/>
<dbReference type="GO" id="GO:0005743">
    <property type="term" value="C:mitochondrial inner membrane"/>
    <property type="evidence" value="ECO:0007669"/>
    <property type="project" value="UniProtKB-SubCell"/>
</dbReference>
<dbReference type="GO" id="GO:0008137">
    <property type="term" value="F:NADH dehydrogenase (ubiquinone) activity"/>
    <property type="evidence" value="ECO:0007669"/>
    <property type="project" value="UniProtKB-EC"/>
</dbReference>
<dbReference type="GO" id="GO:0009060">
    <property type="term" value="P:aerobic respiration"/>
    <property type="evidence" value="ECO:0007669"/>
    <property type="project" value="TreeGrafter"/>
</dbReference>
<dbReference type="HAMAP" id="MF_01350">
    <property type="entry name" value="NDH1_NuoH"/>
    <property type="match status" value="1"/>
</dbReference>
<dbReference type="InterPro" id="IPR001694">
    <property type="entry name" value="NADH_UbQ_OxRdtase_su1/FPO"/>
</dbReference>
<dbReference type="InterPro" id="IPR018086">
    <property type="entry name" value="NADH_UbQ_OxRdtase_su1_CS"/>
</dbReference>
<dbReference type="PANTHER" id="PTHR11432">
    <property type="entry name" value="NADH DEHYDROGENASE SUBUNIT 1"/>
    <property type="match status" value="1"/>
</dbReference>
<dbReference type="PANTHER" id="PTHR11432:SF3">
    <property type="entry name" value="NADH-UBIQUINONE OXIDOREDUCTASE CHAIN 1"/>
    <property type="match status" value="1"/>
</dbReference>
<dbReference type="Pfam" id="PF00146">
    <property type="entry name" value="NADHdh"/>
    <property type="match status" value="1"/>
</dbReference>
<dbReference type="PROSITE" id="PS00667">
    <property type="entry name" value="COMPLEX1_ND1_1"/>
    <property type="match status" value="1"/>
</dbReference>
<dbReference type="PROSITE" id="PS00668">
    <property type="entry name" value="COMPLEX1_ND1_2"/>
    <property type="match status" value="1"/>
</dbReference>
<geneLocation type="mitochondrion"/>
<proteinExistence type="inferred from homology"/>
<sequence>MYIAVPAEILGIILPLLLGVAFLVLAERKVMAFVQRRKGPDVVGSFGLLQPLADGLKLILKEPISPSSANFSLFRMAPVATFMLSLVARAVVPFDYGMVLSDPNIGLLYLFAISSLGVYGIIIAGWSSNSKYAFLGALRSAAQMVPYEVSIGLILITVLICVGSRNSSEIVMAQKQIWSGIPLFPVLVMFFISRLAETNRAPFDLPEAEAESVAGYNVEYSSMGSALSFLGEYANMILMSGLCTSLSPGGWPPILDLPISKKIPGSIWFSIKVILFLFLYIWVRAAFPRYRYDQLMGLGRKVFLPLSLARVVPVSGVLVTFQWLP</sequence>
<accession>Q01300</accession>
<organism>
    <name type="scientific">Petunia hybrida</name>
    <name type="common">Petunia</name>
    <dbReference type="NCBI Taxonomy" id="4102"/>
    <lineage>
        <taxon>Eukaryota</taxon>
        <taxon>Viridiplantae</taxon>
        <taxon>Streptophyta</taxon>
        <taxon>Embryophyta</taxon>
        <taxon>Tracheophyta</taxon>
        <taxon>Spermatophyta</taxon>
        <taxon>Magnoliopsida</taxon>
        <taxon>eudicotyledons</taxon>
        <taxon>Gunneridae</taxon>
        <taxon>Pentapetalae</taxon>
        <taxon>asterids</taxon>
        <taxon>lamiids</taxon>
        <taxon>Solanales</taxon>
        <taxon>Solanaceae</taxon>
        <taxon>Petunioideae</taxon>
        <taxon>Petunia</taxon>
    </lineage>
</organism>
<gene>
    <name type="primary">ND1</name>
    <name type="synonym">NAD1</name>
</gene>
<protein>
    <recommendedName>
        <fullName>NADH-ubiquinone oxidoreductase chain 1</fullName>
        <ecNumber>7.1.1.2</ecNumber>
    </recommendedName>
    <alternativeName>
        <fullName>NADH dehydrogenase subunit 1</fullName>
    </alternativeName>
</protein>
<name>NU1M_PETHY</name>
<evidence type="ECO:0000250" key="1"/>
<evidence type="ECO:0000255" key="2"/>
<evidence type="ECO:0000305" key="3"/>